<keyword id="KW-0106">Calcium</keyword>
<keyword id="KW-1015">Disulfide bond</keyword>
<keyword id="KW-0378">Hydrolase</keyword>
<keyword id="KW-0479">Metal-binding</keyword>
<keyword id="KW-1185">Reference proteome</keyword>
<keyword id="KW-0719">Serine esterase</keyword>
<keyword id="KW-0732">Signal</keyword>
<protein>
    <recommendedName>
        <fullName evidence="3">Uncharacterized esterase XCC2094</fullName>
        <ecNumber evidence="3">3.1.1.-</ecNumber>
    </recommendedName>
</protein>
<accession>Q8P8Y5</accession>
<organism>
    <name type="scientific">Xanthomonas campestris pv. campestris (strain ATCC 33913 / DSM 3586 / NCPPB 528 / LMG 568 / P 25)</name>
    <dbReference type="NCBI Taxonomy" id="190485"/>
    <lineage>
        <taxon>Bacteria</taxon>
        <taxon>Pseudomonadati</taxon>
        <taxon>Pseudomonadota</taxon>
        <taxon>Gammaproteobacteria</taxon>
        <taxon>Lysobacterales</taxon>
        <taxon>Lysobacteraceae</taxon>
        <taxon>Xanthomonas</taxon>
    </lineage>
</organism>
<proteinExistence type="inferred from homology"/>
<gene>
    <name type="ordered locus">XCC2094</name>
</gene>
<dbReference type="EC" id="3.1.1.-" evidence="3"/>
<dbReference type="EMBL" id="AE008922">
    <property type="protein sequence ID" value="AAM41382.1"/>
    <property type="molecule type" value="Genomic_DNA"/>
</dbReference>
<dbReference type="RefSeq" id="NP_637458.2">
    <property type="nucleotide sequence ID" value="NC_003902.1"/>
</dbReference>
<dbReference type="SMR" id="Q8P8Y5"/>
<dbReference type="STRING" id="190485.XCC2094"/>
<dbReference type="ESTHER" id="xancp-y2094">
    <property type="family name" value="Tannase"/>
</dbReference>
<dbReference type="EnsemblBacteria" id="AAM41382">
    <property type="protein sequence ID" value="AAM41382"/>
    <property type="gene ID" value="XCC2094"/>
</dbReference>
<dbReference type="KEGG" id="xcc:XCC2094"/>
<dbReference type="PATRIC" id="fig|190485.4.peg.2243"/>
<dbReference type="HOGENOM" id="CLU_014819_4_1_6"/>
<dbReference type="OrthoDB" id="7197884at2"/>
<dbReference type="Proteomes" id="UP000001010">
    <property type="component" value="Chromosome"/>
</dbReference>
<dbReference type="GO" id="GO:0052689">
    <property type="term" value="F:carboxylic ester hydrolase activity"/>
    <property type="evidence" value="ECO:0000318"/>
    <property type="project" value="GO_Central"/>
</dbReference>
<dbReference type="GO" id="GO:0046872">
    <property type="term" value="F:metal ion binding"/>
    <property type="evidence" value="ECO:0007669"/>
    <property type="project" value="UniProtKB-KW"/>
</dbReference>
<dbReference type="Gene3D" id="3.40.50.1820">
    <property type="entry name" value="alpha/beta hydrolase"/>
    <property type="match status" value="1"/>
</dbReference>
<dbReference type="InterPro" id="IPR029058">
    <property type="entry name" value="AB_hydrolase_fold"/>
</dbReference>
<dbReference type="InterPro" id="IPR011118">
    <property type="entry name" value="Tannase/feruloyl_esterase"/>
</dbReference>
<dbReference type="PANTHER" id="PTHR33938">
    <property type="entry name" value="FERULOYL ESTERASE B-RELATED"/>
    <property type="match status" value="1"/>
</dbReference>
<dbReference type="PANTHER" id="PTHR33938:SF15">
    <property type="entry name" value="FERULOYL ESTERASE B-RELATED"/>
    <property type="match status" value="1"/>
</dbReference>
<dbReference type="Pfam" id="PF07519">
    <property type="entry name" value="Tannase"/>
    <property type="match status" value="1"/>
</dbReference>
<dbReference type="SUPFAM" id="SSF53474">
    <property type="entry name" value="alpha/beta-Hydrolases"/>
    <property type="match status" value="2"/>
</dbReference>
<evidence type="ECO:0000250" key="1">
    <source>
        <dbReference type="UniProtKB" id="Q2UP89"/>
    </source>
</evidence>
<evidence type="ECO:0000255" key="2"/>
<evidence type="ECO:0000305" key="3"/>
<name>Y2094_XANCP</name>
<comment type="similarity">
    <text evidence="3">Belongs to the tannase family.</text>
</comment>
<sequence length="576" mass="60872">MLRLNGLRVLLRTLAAIGALLTTASASAACADLLALSLPSTTISSATDVPAGAFTAPDGTVLDALPAFCRVVGVSRPASDSEIGFEVWIPSAGWNQNYLQVGTVVFAGNIQYRSLGFALRRGYATATTDGGHRASIGDASFARGHPQKILDWGYQALATTISNGKALVSAYTHRAPHYSYFFGASNGGRDALIAAQRFPGAFDGIIADAPSSAWVHNAFSWLWSQDAQFGSPAATISAAKLPAIQAAALAQCDAKDHTADGVVNDPRRCRFDPRVLLCSGAESDACLTAPQLQTLAAILAGPVNPRTGERIYYGFEPFAVATPGTWNQWITGNAAVPGGGHAVLANQFFANMVFDTGSAGFDHTQVNFDTDVARAERKPVAGQPLASVIDATSADLSGFRARNGKMILYIGWEDPVVPPRGAITYYESVVARQWLDNPQISRAEDALAQTQQFFRLFMVPGMGHFTGGPGTSAFGALYGPPALAIDRQHDVLAAMEAWVEQGIAPERIVAAKYANDDPAKGVVRTRPLCHYPQSAVWIGQGSAEDAQNFICVDSPRGAYLDAAPARAPLPSSAQSR</sequence>
<feature type="signal peptide" evidence="2">
    <location>
        <begin position="1"/>
        <end position="28"/>
    </location>
</feature>
<feature type="chain" id="PRO_0000221474" description="Uncharacterized esterase XCC2094">
    <location>
        <begin position="29"/>
        <end position="576"/>
    </location>
</feature>
<feature type="active site" description="Acyl-ester intermediate" evidence="1">
    <location>
        <position position="185"/>
    </location>
</feature>
<feature type="active site" description="Charge relay system" evidence="1">
    <location>
        <position position="414"/>
    </location>
</feature>
<feature type="active site" description="Charge relay system" evidence="1">
    <location>
        <position position="464"/>
    </location>
</feature>
<feature type="binding site" evidence="1">
    <location>
        <position position="253"/>
    </location>
    <ligand>
        <name>Ca(2+)</name>
        <dbReference type="ChEBI" id="CHEBI:29108"/>
    </ligand>
</feature>
<feature type="binding site" evidence="1">
    <location>
        <position position="256"/>
    </location>
    <ligand>
        <name>Ca(2+)</name>
        <dbReference type="ChEBI" id="CHEBI:29108"/>
    </ligand>
</feature>
<feature type="binding site" evidence="1">
    <location>
        <position position="260"/>
    </location>
    <ligand>
        <name>Ca(2+)</name>
        <dbReference type="ChEBI" id="CHEBI:29108"/>
    </ligand>
</feature>
<feature type="binding site" evidence="1">
    <location>
        <position position="262"/>
    </location>
    <ligand>
        <name>Ca(2+)</name>
        <dbReference type="ChEBI" id="CHEBI:29108"/>
    </ligand>
</feature>
<feature type="disulfide bond" evidence="1">
    <location>
        <begin position="252"/>
        <end position="269"/>
    </location>
</feature>
<feature type="disulfide bond" evidence="1">
    <location>
        <begin position="278"/>
        <end position="286"/>
    </location>
</feature>
<feature type="disulfide bond" evidence="1">
    <location>
        <begin position="529"/>
        <end position="551"/>
    </location>
</feature>
<reference key="1">
    <citation type="journal article" date="2002" name="Nature">
        <title>Comparison of the genomes of two Xanthomonas pathogens with differing host specificities.</title>
        <authorList>
            <person name="da Silva A.C.R."/>
            <person name="Ferro J.A."/>
            <person name="Reinach F.C."/>
            <person name="Farah C.S."/>
            <person name="Furlan L.R."/>
            <person name="Quaggio R.B."/>
            <person name="Monteiro-Vitorello C.B."/>
            <person name="Van Sluys M.A."/>
            <person name="Almeida N.F. Jr."/>
            <person name="Alves L.M.C."/>
            <person name="do Amaral A.M."/>
            <person name="Bertolini M.C."/>
            <person name="Camargo L.E.A."/>
            <person name="Camarotte G."/>
            <person name="Cannavan F."/>
            <person name="Cardozo J."/>
            <person name="Chambergo F."/>
            <person name="Ciapina L.P."/>
            <person name="Cicarelli R.M.B."/>
            <person name="Coutinho L.L."/>
            <person name="Cursino-Santos J.R."/>
            <person name="El-Dorry H."/>
            <person name="Faria J.B."/>
            <person name="Ferreira A.J.S."/>
            <person name="Ferreira R.C.C."/>
            <person name="Ferro M.I.T."/>
            <person name="Formighieri E.F."/>
            <person name="Franco M.C."/>
            <person name="Greggio C.C."/>
            <person name="Gruber A."/>
            <person name="Katsuyama A.M."/>
            <person name="Kishi L.T."/>
            <person name="Leite R.P."/>
            <person name="Lemos E.G.M."/>
            <person name="Lemos M.V.F."/>
            <person name="Locali E.C."/>
            <person name="Machado M.A."/>
            <person name="Madeira A.M.B.N."/>
            <person name="Martinez-Rossi N.M."/>
            <person name="Martins E.C."/>
            <person name="Meidanis J."/>
            <person name="Menck C.F.M."/>
            <person name="Miyaki C.Y."/>
            <person name="Moon D.H."/>
            <person name="Moreira L.M."/>
            <person name="Novo M.T.M."/>
            <person name="Okura V.K."/>
            <person name="Oliveira M.C."/>
            <person name="Oliveira V.R."/>
            <person name="Pereira H.A."/>
            <person name="Rossi A."/>
            <person name="Sena J.A.D."/>
            <person name="Silva C."/>
            <person name="de Souza R.F."/>
            <person name="Spinola L.A.F."/>
            <person name="Takita M.A."/>
            <person name="Tamura R.E."/>
            <person name="Teixeira E.C."/>
            <person name="Tezza R.I.D."/>
            <person name="Trindade dos Santos M."/>
            <person name="Truffi D."/>
            <person name="Tsai S.M."/>
            <person name="White F.F."/>
            <person name="Setubal J.C."/>
            <person name="Kitajima J.P."/>
        </authorList>
    </citation>
    <scope>NUCLEOTIDE SEQUENCE [LARGE SCALE GENOMIC DNA]</scope>
    <source>
        <strain>ATCC 33913 / DSM 3586 / NCPPB 528 / LMG 568 / P 25</strain>
    </source>
</reference>